<gene>
    <name type="ordered locus">At3g28050</name>
    <name type="ORF">MMG15.6</name>
</gene>
<protein>
    <recommendedName>
        <fullName>WAT1-related protein At3g28050</fullName>
    </recommendedName>
</protein>
<comment type="subcellular location">
    <subcellularLocation>
        <location evidence="1">Membrane</location>
        <topology evidence="4">Multi-pass membrane protein</topology>
    </subcellularLocation>
</comment>
<comment type="similarity">
    <text evidence="4">Belongs to the drug/metabolite transporter (DMT) superfamily. Plant drug/metabolite exporter (P-DME) (TC 2.A.7.4) family.</text>
</comment>
<comment type="sequence caution" evidence="4">
    <conflict type="erroneous gene model prediction">
        <sequence resource="EMBL-CDS" id="BAB01127"/>
    </conflict>
</comment>
<evidence type="ECO:0000250" key="1"/>
<evidence type="ECO:0000255" key="2"/>
<evidence type="ECO:0000256" key="3">
    <source>
        <dbReference type="SAM" id="MobiDB-lite"/>
    </source>
</evidence>
<evidence type="ECO:0000305" key="4"/>
<proteinExistence type="evidence at transcript level"/>
<keyword id="KW-0472">Membrane</keyword>
<keyword id="KW-1185">Reference proteome</keyword>
<keyword id="KW-0677">Repeat</keyword>
<keyword id="KW-0812">Transmembrane</keyword>
<keyword id="KW-1133">Transmembrane helix</keyword>
<name>WTR18_ARATH</name>
<feature type="chain" id="PRO_0000421326" description="WAT1-related protein At3g28050">
    <location>
        <begin position="1"/>
        <end position="367"/>
    </location>
</feature>
<feature type="transmembrane region" description="Helical" evidence="2">
    <location>
        <begin position="10"/>
        <end position="30"/>
    </location>
</feature>
<feature type="transmembrane region" description="Helical" evidence="2">
    <location>
        <begin position="40"/>
        <end position="60"/>
    </location>
</feature>
<feature type="transmembrane region" description="Helical" evidence="2">
    <location>
        <begin position="73"/>
        <end position="93"/>
    </location>
</feature>
<feature type="transmembrane region" description="Helical" evidence="2">
    <location>
        <begin position="103"/>
        <end position="123"/>
    </location>
</feature>
<feature type="transmembrane region" description="Helical" evidence="2">
    <location>
        <begin position="142"/>
        <end position="162"/>
    </location>
</feature>
<feature type="transmembrane region" description="Helical" evidence="2">
    <location>
        <begin position="179"/>
        <end position="199"/>
    </location>
</feature>
<feature type="transmembrane region" description="Helical" evidence="2">
    <location>
        <begin position="211"/>
        <end position="231"/>
    </location>
</feature>
<feature type="transmembrane region" description="Helical" evidence="2">
    <location>
        <begin position="246"/>
        <end position="266"/>
    </location>
</feature>
<feature type="transmembrane region" description="Helical" evidence="2">
    <location>
        <begin position="276"/>
        <end position="296"/>
    </location>
</feature>
<feature type="transmembrane region" description="Helical" evidence="2">
    <location>
        <begin position="301"/>
        <end position="321"/>
    </location>
</feature>
<feature type="domain" description="EamA 1">
    <location>
        <begin position="25"/>
        <end position="153"/>
    </location>
</feature>
<feature type="domain" description="EamA 2">
    <location>
        <begin position="195"/>
        <end position="319"/>
    </location>
</feature>
<feature type="region of interest" description="Disordered" evidence="3">
    <location>
        <begin position="338"/>
        <end position="367"/>
    </location>
</feature>
<feature type="sequence conflict" description="In Ref. 4; AAM65952." evidence="4" ref="4">
    <original>E</original>
    <variation>D</variation>
    <location>
        <position position="126"/>
    </location>
</feature>
<feature type="sequence conflict" description="In Ref. 4; AAM65952." evidence="4" ref="4">
    <original>V</original>
    <variation>I</variation>
    <location>
        <position position="214"/>
    </location>
</feature>
<feature type="sequence conflict" description="In Ref. 4; AAM65952." evidence="4" ref="4">
    <original>S</original>
    <variation>I</variation>
    <location>
        <position position="222"/>
    </location>
</feature>
<feature type="sequence conflict" description="In Ref. 4; AAM65952." evidence="4" ref="4">
    <original>K</original>
    <variation>E</variation>
    <location>
        <position position="354"/>
    </location>
</feature>
<accession>Q94JU2</accession>
<accession>Q8L9I2</accession>
<accession>Q9LRT0</accession>
<sequence>MARKYFQREVLPVTALVIMECANVGLNTLFKAATLKGMSFHVFIVYSYGLAALLLLPSLFCSFRSRTLPPMNFSILYKIVLLGIIGCCSNIMGYTGINYSSPTLASAISNLTPAFTFLLAVVFRMESVSFKRTSSVAKMLGTVVSIGGAFIVTLYNGPVVIAKSPPSVSLRSQSTNPNWILGAGFLAVEYFCVPLWYIVQTQIMREYPAEFTVVCFYSIGVSFWTALVTLFTEGNDLGAWKIKPNIALVSIVCSGLFGSCINNTIHTWALRIKGPLFVAMFKPLSIAIAVAMGVIFLRDSLYIGSLIGATVITIGFYTVMWGKAKEVALVEDDNKANHEEANEADLDSPSGSQKAPLLESYKNDEHV</sequence>
<organism>
    <name type="scientific">Arabidopsis thaliana</name>
    <name type="common">Mouse-ear cress</name>
    <dbReference type="NCBI Taxonomy" id="3702"/>
    <lineage>
        <taxon>Eukaryota</taxon>
        <taxon>Viridiplantae</taxon>
        <taxon>Streptophyta</taxon>
        <taxon>Embryophyta</taxon>
        <taxon>Tracheophyta</taxon>
        <taxon>Spermatophyta</taxon>
        <taxon>Magnoliopsida</taxon>
        <taxon>eudicotyledons</taxon>
        <taxon>Gunneridae</taxon>
        <taxon>Pentapetalae</taxon>
        <taxon>rosids</taxon>
        <taxon>malvids</taxon>
        <taxon>Brassicales</taxon>
        <taxon>Brassicaceae</taxon>
        <taxon>Camelineae</taxon>
        <taxon>Arabidopsis</taxon>
    </lineage>
</organism>
<dbReference type="EMBL" id="AB028616">
    <property type="protein sequence ID" value="BAB01127.1"/>
    <property type="status" value="ALT_SEQ"/>
    <property type="molecule type" value="Genomic_DNA"/>
</dbReference>
<dbReference type="EMBL" id="CP002686">
    <property type="protein sequence ID" value="AEE77395.1"/>
    <property type="molecule type" value="Genomic_DNA"/>
</dbReference>
<dbReference type="EMBL" id="AF372936">
    <property type="protein sequence ID" value="AAK50076.1"/>
    <property type="molecule type" value="mRNA"/>
</dbReference>
<dbReference type="EMBL" id="AY133520">
    <property type="protein sequence ID" value="AAM91350.1"/>
    <property type="molecule type" value="mRNA"/>
</dbReference>
<dbReference type="EMBL" id="AY088415">
    <property type="protein sequence ID" value="AAM65952.1"/>
    <property type="molecule type" value="mRNA"/>
</dbReference>
<dbReference type="SMR" id="Q94JU2"/>
<dbReference type="BioGRID" id="7759">
    <property type="interactions" value="9"/>
</dbReference>
<dbReference type="FunCoup" id="Q94JU2">
    <property type="interactions" value="17"/>
</dbReference>
<dbReference type="IntAct" id="Q94JU2">
    <property type="interactions" value="9"/>
</dbReference>
<dbReference type="STRING" id="3702.Q94JU2"/>
<dbReference type="iPTMnet" id="Q94JU2"/>
<dbReference type="PaxDb" id="3702-AT3G28050.1"/>
<dbReference type="ProteomicsDB" id="243043"/>
<dbReference type="EnsemblPlants" id="AT3G28050.1">
    <property type="protein sequence ID" value="AT3G28050.1"/>
    <property type="gene ID" value="AT3G28050"/>
</dbReference>
<dbReference type="Gramene" id="AT3G28050.1">
    <property type="protein sequence ID" value="AT3G28050.1"/>
    <property type="gene ID" value="AT3G28050"/>
</dbReference>
<dbReference type="KEGG" id="ath:AT3G28050"/>
<dbReference type="Araport" id="AT3G28050"/>
<dbReference type="TAIR" id="AT3G28050">
    <property type="gene designation" value="UMAMIT41"/>
</dbReference>
<dbReference type="eggNOG" id="ENOG502QRQK">
    <property type="taxonomic scope" value="Eukaryota"/>
</dbReference>
<dbReference type="HOGENOM" id="CLU_025359_0_1_1"/>
<dbReference type="InParanoid" id="Q94JU2"/>
<dbReference type="OMA" id="TIGFYTV"/>
<dbReference type="OrthoDB" id="1728340at2759"/>
<dbReference type="PhylomeDB" id="Q94JU2"/>
<dbReference type="PRO" id="PR:Q94JU2"/>
<dbReference type="Proteomes" id="UP000006548">
    <property type="component" value="Chromosome 3"/>
</dbReference>
<dbReference type="ExpressionAtlas" id="Q94JU2">
    <property type="expression patterns" value="baseline and differential"/>
</dbReference>
<dbReference type="GO" id="GO:0016020">
    <property type="term" value="C:membrane"/>
    <property type="evidence" value="ECO:0007669"/>
    <property type="project" value="UniProtKB-SubCell"/>
</dbReference>
<dbReference type="GO" id="GO:0022857">
    <property type="term" value="F:transmembrane transporter activity"/>
    <property type="evidence" value="ECO:0007669"/>
    <property type="project" value="InterPro"/>
</dbReference>
<dbReference type="InterPro" id="IPR000620">
    <property type="entry name" value="EamA_dom"/>
</dbReference>
<dbReference type="InterPro" id="IPR030184">
    <property type="entry name" value="WAT1-related"/>
</dbReference>
<dbReference type="PANTHER" id="PTHR31218">
    <property type="entry name" value="WAT1-RELATED PROTEIN"/>
    <property type="match status" value="1"/>
</dbReference>
<dbReference type="Pfam" id="PF00892">
    <property type="entry name" value="EamA"/>
    <property type="match status" value="1"/>
</dbReference>
<dbReference type="SUPFAM" id="SSF103481">
    <property type="entry name" value="Multidrug resistance efflux transporter EmrE"/>
    <property type="match status" value="2"/>
</dbReference>
<reference key="1">
    <citation type="journal article" date="2000" name="DNA Res.">
        <title>Structural analysis of Arabidopsis thaliana chromosome 3. II. Sequence features of the 4,251,695 bp regions covered by 90 P1, TAC and BAC clones.</title>
        <authorList>
            <person name="Kaneko T."/>
            <person name="Katoh T."/>
            <person name="Sato S."/>
            <person name="Nakamura Y."/>
            <person name="Asamizu E."/>
            <person name="Tabata S."/>
        </authorList>
    </citation>
    <scope>NUCLEOTIDE SEQUENCE [LARGE SCALE GENOMIC DNA]</scope>
    <source>
        <strain>cv. Columbia</strain>
    </source>
</reference>
<reference key="2">
    <citation type="journal article" date="2017" name="Plant J.">
        <title>Araport11: a complete reannotation of the Arabidopsis thaliana reference genome.</title>
        <authorList>
            <person name="Cheng C.Y."/>
            <person name="Krishnakumar V."/>
            <person name="Chan A.P."/>
            <person name="Thibaud-Nissen F."/>
            <person name="Schobel S."/>
            <person name="Town C.D."/>
        </authorList>
    </citation>
    <scope>GENOME REANNOTATION</scope>
    <source>
        <strain>cv. Columbia</strain>
    </source>
</reference>
<reference key="3">
    <citation type="journal article" date="2003" name="Science">
        <title>Empirical analysis of transcriptional activity in the Arabidopsis genome.</title>
        <authorList>
            <person name="Yamada K."/>
            <person name="Lim J."/>
            <person name="Dale J.M."/>
            <person name="Chen H."/>
            <person name="Shinn P."/>
            <person name="Palm C.J."/>
            <person name="Southwick A.M."/>
            <person name="Wu H.C."/>
            <person name="Kim C.J."/>
            <person name="Nguyen M."/>
            <person name="Pham P.K."/>
            <person name="Cheuk R.F."/>
            <person name="Karlin-Newmann G."/>
            <person name="Liu S.X."/>
            <person name="Lam B."/>
            <person name="Sakano H."/>
            <person name="Wu T."/>
            <person name="Yu G."/>
            <person name="Miranda M."/>
            <person name="Quach H.L."/>
            <person name="Tripp M."/>
            <person name="Chang C.H."/>
            <person name="Lee J.M."/>
            <person name="Toriumi M.J."/>
            <person name="Chan M.M."/>
            <person name="Tang C.C."/>
            <person name="Onodera C.S."/>
            <person name="Deng J.M."/>
            <person name="Akiyama K."/>
            <person name="Ansari Y."/>
            <person name="Arakawa T."/>
            <person name="Banh J."/>
            <person name="Banno F."/>
            <person name="Bowser L."/>
            <person name="Brooks S.Y."/>
            <person name="Carninci P."/>
            <person name="Chao Q."/>
            <person name="Choy N."/>
            <person name="Enju A."/>
            <person name="Goldsmith A.D."/>
            <person name="Gurjal M."/>
            <person name="Hansen N.F."/>
            <person name="Hayashizaki Y."/>
            <person name="Johnson-Hopson C."/>
            <person name="Hsuan V.W."/>
            <person name="Iida K."/>
            <person name="Karnes M."/>
            <person name="Khan S."/>
            <person name="Koesema E."/>
            <person name="Ishida J."/>
            <person name="Jiang P.X."/>
            <person name="Jones T."/>
            <person name="Kawai J."/>
            <person name="Kamiya A."/>
            <person name="Meyers C."/>
            <person name="Nakajima M."/>
            <person name="Narusaka M."/>
            <person name="Seki M."/>
            <person name="Sakurai T."/>
            <person name="Satou M."/>
            <person name="Tamse R."/>
            <person name="Vaysberg M."/>
            <person name="Wallender E.K."/>
            <person name="Wong C."/>
            <person name="Yamamura Y."/>
            <person name="Yuan S."/>
            <person name="Shinozaki K."/>
            <person name="Davis R.W."/>
            <person name="Theologis A."/>
            <person name="Ecker J.R."/>
        </authorList>
    </citation>
    <scope>NUCLEOTIDE SEQUENCE [LARGE SCALE MRNA]</scope>
    <source>
        <strain>cv. Columbia</strain>
    </source>
</reference>
<reference key="4">
    <citation type="submission" date="2002-03" db="EMBL/GenBank/DDBJ databases">
        <title>Full-length cDNA from Arabidopsis thaliana.</title>
        <authorList>
            <person name="Brover V.V."/>
            <person name="Troukhan M.E."/>
            <person name="Alexandrov N.A."/>
            <person name="Lu Y.-P."/>
            <person name="Flavell R.B."/>
            <person name="Feldmann K.A."/>
        </authorList>
    </citation>
    <scope>NUCLEOTIDE SEQUENCE [LARGE SCALE MRNA]</scope>
</reference>